<accession>Q5L1R7</accession>
<dbReference type="EMBL" id="BA000043">
    <property type="protein sequence ID" value="BAD75113.1"/>
    <property type="molecule type" value="Genomic_DNA"/>
</dbReference>
<dbReference type="RefSeq" id="WP_011230329.1">
    <property type="nucleotide sequence ID" value="NC_006510.1"/>
</dbReference>
<dbReference type="STRING" id="235909.GK0828"/>
<dbReference type="KEGG" id="gka:GK0828"/>
<dbReference type="eggNOG" id="ENOG5032YMN">
    <property type="taxonomic scope" value="Bacteria"/>
</dbReference>
<dbReference type="HOGENOM" id="CLU_142282_0_0_9"/>
<dbReference type="Proteomes" id="UP000001172">
    <property type="component" value="Chromosome"/>
</dbReference>
<dbReference type="HAMAP" id="MF_01861">
    <property type="entry name" value="UPF0738"/>
    <property type="match status" value="1"/>
</dbReference>
<dbReference type="InterPro" id="IPR020908">
    <property type="entry name" value="UPF0738"/>
</dbReference>
<dbReference type="Pfam" id="PF19785">
    <property type="entry name" value="UPF0738"/>
    <property type="match status" value="1"/>
</dbReference>
<comment type="similarity">
    <text evidence="1">Belongs to the UPF0738 family.</text>
</comment>
<evidence type="ECO:0000255" key="1">
    <source>
        <dbReference type="HAMAP-Rule" id="MF_01861"/>
    </source>
</evidence>
<organism>
    <name type="scientific">Geobacillus kaustophilus (strain HTA426)</name>
    <dbReference type="NCBI Taxonomy" id="235909"/>
    <lineage>
        <taxon>Bacteria</taxon>
        <taxon>Bacillati</taxon>
        <taxon>Bacillota</taxon>
        <taxon>Bacilli</taxon>
        <taxon>Bacillales</taxon>
        <taxon>Anoxybacillaceae</taxon>
        <taxon>Geobacillus</taxon>
        <taxon>Geobacillus thermoleovorans group</taxon>
    </lineage>
</organism>
<sequence>MNEKWIVERVEREGGRLWLYVNDAPVPLARVTPKRHMLVDSDALAFAYILETDDRFLYVMIPKPWWPELKAALDAKEPVWLRCGERTLELEQFHDELSYLLENIRGNANYGEALEQAVQDVFFEQ</sequence>
<name>Y828_GEOKA</name>
<feature type="chain" id="PRO_0000369654" description="UPF0738 protein GK0828">
    <location>
        <begin position="1"/>
        <end position="125"/>
    </location>
</feature>
<protein>
    <recommendedName>
        <fullName evidence="1">UPF0738 protein GK0828</fullName>
    </recommendedName>
</protein>
<reference key="1">
    <citation type="journal article" date="2004" name="Nucleic Acids Res.">
        <title>Thermoadaptation trait revealed by the genome sequence of thermophilic Geobacillus kaustophilus.</title>
        <authorList>
            <person name="Takami H."/>
            <person name="Takaki Y."/>
            <person name="Chee G.-J."/>
            <person name="Nishi S."/>
            <person name="Shimamura S."/>
            <person name="Suzuki H."/>
            <person name="Matsui S."/>
            <person name="Uchiyama I."/>
        </authorList>
    </citation>
    <scope>NUCLEOTIDE SEQUENCE [LARGE SCALE GENOMIC DNA]</scope>
    <source>
        <strain>HTA426</strain>
    </source>
</reference>
<gene>
    <name type="ordered locus">GK0828</name>
</gene>
<keyword id="KW-1185">Reference proteome</keyword>
<proteinExistence type="inferred from homology"/>